<accession>P64268</accession>
<accession>Q8XGE3</accession>
<name>GNS_SALTI</name>
<evidence type="ECO:0000305" key="1"/>
<sequence length="57" mass="6483">MNSEELTHKAEEEIAALISKKVAELRKKTGQEVSEIEFAPRETMKGLEGYHVKIKLL</sequence>
<gene>
    <name type="primary">gns</name>
    <name type="ordered locus">STY1938</name>
    <name type="ordered locus">t1068</name>
</gene>
<comment type="similarity">
    <text evidence="1">Belongs to the gns family.</text>
</comment>
<dbReference type="EMBL" id="AL513382">
    <property type="protein sequence ID" value="CAD05492.1"/>
    <property type="molecule type" value="Genomic_DNA"/>
</dbReference>
<dbReference type="EMBL" id="AE014613">
    <property type="protein sequence ID" value="AAO68734.1"/>
    <property type="molecule type" value="Genomic_DNA"/>
</dbReference>
<dbReference type="RefSeq" id="NP_456316.1">
    <property type="nucleotide sequence ID" value="NC_003198.1"/>
</dbReference>
<dbReference type="RefSeq" id="WP_001083582.1">
    <property type="nucleotide sequence ID" value="NZ_WSUR01000004.1"/>
</dbReference>
<dbReference type="SMR" id="P64268"/>
<dbReference type="STRING" id="220341.gene:17585857"/>
<dbReference type="KEGG" id="stt:t1068"/>
<dbReference type="KEGG" id="sty:STY1938"/>
<dbReference type="PATRIC" id="fig|220341.7.peg.1955"/>
<dbReference type="eggNOG" id="ENOG50332DR">
    <property type="taxonomic scope" value="Bacteria"/>
</dbReference>
<dbReference type="HOGENOM" id="CLU_197432_0_0_6"/>
<dbReference type="OrthoDB" id="6593582at2"/>
<dbReference type="Proteomes" id="UP000000541">
    <property type="component" value="Chromosome"/>
</dbReference>
<dbReference type="Proteomes" id="UP000002670">
    <property type="component" value="Chromosome"/>
</dbReference>
<dbReference type="InterPro" id="IPR012563">
    <property type="entry name" value="Gns"/>
</dbReference>
<dbReference type="Pfam" id="PF08178">
    <property type="entry name" value="GnsAB_toxin"/>
    <property type="match status" value="1"/>
</dbReference>
<organism>
    <name type="scientific">Salmonella typhi</name>
    <dbReference type="NCBI Taxonomy" id="90370"/>
    <lineage>
        <taxon>Bacteria</taxon>
        <taxon>Pseudomonadati</taxon>
        <taxon>Pseudomonadota</taxon>
        <taxon>Gammaproteobacteria</taxon>
        <taxon>Enterobacterales</taxon>
        <taxon>Enterobacteriaceae</taxon>
        <taxon>Salmonella</taxon>
    </lineage>
</organism>
<proteinExistence type="inferred from homology"/>
<reference key="1">
    <citation type="journal article" date="2001" name="Nature">
        <title>Complete genome sequence of a multiple drug resistant Salmonella enterica serovar Typhi CT18.</title>
        <authorList>
            <person name="Parkhill J."/>
            <person name="Dougan G."/>
            <person name="James K.D."/>
            <person name="Thomson N.R."/>
            <person name="Pickard D."/>
            <person name="Wain J."/>
            <person name="Churcher C.M."/>
            <person name="Mungall K.L."/>
            <person name="Bentley S.D."/>
            <person name="Holden M.T.G."/>
            <person name="Sebaihia M."/>
            <person name="Baker S."/>
            <person name="Basham D."/>
            <person name="Brooks K."/>
            <person name="Chillingworth T."/>
            <person name="Connerton P."/>
            <person name="Cronin A."/>
            <person name="Davis P."/>
            <person name="Davies R.M."/>
            <person name="Dowd L."/>
            <person name="White N."/>
            <person name="Farrar J."/>
            <person name="Feltwell T."/>
            <person name="Hamlin N."/>
            <person name="Haque A."/>
            <person name="Hien T.T."/>
            <person name="Holroyd S."/>
            <person name="Jagels K."/>
            <person name="Krogh A."/>
            <person name="Larsen T.S."/>
            <person name="Leather S."/>
            <person name="Moule S."/>
            <person name="O'Gaora P."/>
            <person name="Parry C."/>
            <person name="Quail M.A."/>
            <person name="Rutherford K.M."/>
            <person name="Simmonds M."/>
            <person name="Skelton J."/>
            <person name="Stevens K."/>
            <person name="Whitehead S."/>
            <person name="Barrell B.G."/>
        </authorList>
    </citation>
    <scope>NUCLEOTIDE SEQUENCE [LARGE SCALE GENOMIC DNA]</scope>
    <source>
        <strain>CT18</strain>
    </source>
</reference>
<reference key="2">
    <citation type="journal article" date="2003" name="J. Bacteriol.">
        <title>Comparative genomics of Salmonella enterica serovar Typhi strains Ty2 and CT18.</title>
        <authorList>
            <person name="Deng W."/>
            <person name="Liou S.-R."/>
            <person name="Plunkett G. III"/>
            <person name="Mayhew G.F."/>
            <person name="Rose D.J."/>
            <person name="Burland V."/>
            <person name="Kodoyianni V."/>
            <person name="Schwartz D.C."/>
            <person name="Blattner F.R."/>
        </authorList>
    </citation>
    <scope>NUCLEOTIDE SEQUENCE [LARGE SCALE GENOMIC DNA]</scope>
    <source>
        <strain>ATCC 700931 / Ty2</strain>
    </source>
</reference>
<protein>
    <recommendedName>
        <fullName>Protein gns</fullName>
    </recommendedName>
</protein>
<feature type="chain" id="PRO_0000201726" description="Protein gns">
    <location>
        <begin position="1"/>
        <end position="57"/>
    </location>
</feature>